<gene>
    <name type="primary">SERINC3</name>
</gene>
<dbReference type="EMBL" id="BC123501">
    <property type="protein sequence ID" value="AAI23502.1"/>
    <property type="molecule type" value="mRNA"/>
</dbReference>
<dbReference type="RefSeq" id="NP_001076881.1">
    <property type="nucleotide sequence ID" value="NM_001083412.1"/>
</dbReference>
<dbReference type="SMR" id="A4FUZ5"/>
<dbReference type="FunCoup" id="A4FUZ5">
    <property type="interactions" value="3585"/>
</dbReference>
<dbReference type="STRING" id="9913.ENSBTAP00000002833"/>
<dbReference type="GlyCosmos" id="A4FUZ5">
    <property type="glycosylation" value="3 sites, No reported glycans"/>
</dbReference>
<dbReference type="GlyGen" id="A4FUZ5">
    <property type="glycosylation" value="3 sites"/>
</dbReference>
<dbReference type="PaxDb" id="9913-ENSBTAP00000002833"/>
<dbReference type="Ensembl" id="ENSBTAT00000002833.5">
    <property type="protein sequence ID" value="ENSBTAP00000002833.4"/>
    <property type="gene ID" value="ENSBTAG00000002187.6"/>
</dbReference>
<dbReference type="GeneID" id="511861"/>
<dbReference type="KEGG" id="bta:511861"/>
<dbReference type="CTD" id="10955"/>
<dbReference type="VEuPathDB" id="HostDB:ENSBTAG00000002187"/>
<dbReference type="VGNC" id="VGNC:34462">
    <property type="gene designation" value="SERINC3"/>
</dbReference>
<dbReference type="eggNOG" id="KOG2592">
    <property type="taxonomic scope" value="Eukaryota"/>
</dbReference>
<dbReference type="GeneTree" id="ENSGT01030000234623"/>
<dbReference type="HOGENOM" id="CLU_029574_5_0_1"/>
<dbReference type="InParanoid" id="A4FUZ5"/>
<dbReference type="OMA" id="KSPQWWD"/>
<dbReference type="OrthoDB" id="5963193at2759"/>
<dbReference type="TreeFam" id="TF312881"/>
<dbReference type="Reactome" id="R-BTA-977347">
    <property type="pathway name" value="Serine biosynthesis"/>
</dbReference>
<dbReference type="Proteomes" id="UP000009136">
    <property type="component" value="Chromosome 13"/>
</dbReference>
<dbReference type="Bgee" id="ENSBTAG00000002187">
    <property type="expression patterns" value="Expressed in spermatocyte and 105 other cell types or tissues"/>
</dbReference>
<dbReference type="GO" id="GO:0000139">
    <property type="term" value="C:Golgi membrane"/>
    <property type="evidence" value="ECO:0007669"/>
    <property type="project" value="UniProtKB-SubCell"/>
</dbReference>
<dbReference type="GO" id="GO:0016020">
    <property type="term" value="C:membrane"/>
    <property type="evidence" value="ECO:0000318"/>
    <property type="project" value="GO_Central"/>
</dbReference>
<dbReference type="GO" id="GO:0005886">
    <property type="term" value="C:plasma membrane"/>
    <property type="evidence" value="ECO:0000250"/>
    <property type="project" value="UniProtKB"/>
</dbReference>
<dbReference type="GO" id="GO:0017128">
    <property type="term" value="F:phospholipid scramblase activity"/>
    <property type="evidence" value="ECO:0000250"/>
    <property type="project" value="UniProtKB"/>
</dbReference>
<dbReference type="GO" id="GO:0140374">
    <property type="term" value="P:antiviral innate immune response"/>
    <property type="evidence" value="ECO:0000250"/>
    <property type="project" value="UniProtKB"/>
</dbReference>
<dbReference type="GO" id="GO:0017121">
    <property type="term" value="P:plasma membrane phospholipid scrambling"/>
    <property type="evidence" value="ECO:0000250"/>
    <property type="project" value="UniProtKB"/>
</dbReference>
<dbReference type="InterPro" id="IPR005016">
    <property type="entry name" value="TDE1/TMS"/>
</dbReference>
<dbReference type="PANTHER" id="PTHR10383">
    <property type="entry name" value="SERINE INCORPORATOR"/>
    <property type="match status" value="1"/>
</dbReference>
<dbReference type="PANTHER" id="PTHR10383:SF51">
    <property type="entry name" value="SERINE INCORPORATOR 3"/>
    <property type="match status" value="1"/>
</dbReference>
<dbReference type="Pfam" id="PF03348">
    <property type="entry name" value="Serinc"/>
    <property type="match status" value="1"/>
</dbReference>
<evidence type="ECO:0000250" key="1">
    <source>
        <dbReference type="UniProtKB" id="Q13530"/>
    </source>
</evidence>
<evidence type="ECO:0000250" key="2">
    <source>
        <dbReference type="UniProtKB" id="Q86VE9"/>
    </source>
</evidence>
<evidence type="ECO:0000250" key="3">
    <source>
        <dbReference type="UniProtKB" id="Q9NRX5"/>
    </source>
</evidence>
<evidence type="ECO:0000250" key="4">
    <source>
        <dbReference type="UniProtKB" id="Q9QZI9"/>
    </source>
</evidence>
<evidence type="ECO:0000255" key="5"/>
<evidence type="ECO:0000305" key="6"/>
<comment type="function">
    <text evidence="1">Restriction factor required to restrict infectivity of gammaretroviruses: acts by inhibiting an early step of viral infection. Impairs the penetration of the viral particle into the cytoplasm. Non-ATP-dependent, non-specific lipid transporter for phosphatidylserine, phosphatidylcholine, and phosphatidylethanolamine. Functions as a scramblase that flips lipids in both directions across the membrane. Phospholipid scrambling results in gammaretroviral surface exposure of phosphatidylserine and loss of membrane asymmetry, which leads to loss of infectivity.</text>
</comment>
<comment type="catalytic activity">
    <reaction evidence="1">
        <text>a 1,2-diacyl-sn-glycero-3-phospho-L-serine(in) = a 1,2-diacyl-sn-glycero-3-phospho-L-serine(out)</text>
        <dbReference type="Rhea" id="RHEA:38663"/>
        <dbReference type="ChEBI" id="CHEBI:57262"/>
    </reaction>
</comment>
<comment type="catalytic activity">
    <reaction evidence="1">
        <text>a 1,2-diacyl-sn-glycero-3-phosphocholine(in) = a 1,2-diacyl-sn-glycero-3-phosphocholine(out)</text>
        <dbReference type="Rhea" id="RHEA:38571"/>
        <dbReference type="ChEBI" id="CHEBI:57643"/>
    </reaction>
</comment>
<comment type="catalytic activity">
    <reaction evidence="1">
        <text>a 1,2-diacyl-sn-glycero-3-phosphoethanolamine(in) = a 1,2-diacyl-sn-glycero-3-phosphoethanolamine(out)</text>
        <dbReference type="Rhea" id="RHEA:38895"/>
        <dbReference type="ChEBI" id="CHEBI:64612"/>
    </reaction>
</comment>
<comment type="subcellular location">
    <subcellularLocation>
        <location evidence="2">Cell membrane</location>
        <topology evidence="5">Multi-pass membrane protein</topology>
    </subcellularLocation>
    <subcellularLocation>
        <location evidence="4">Golgi apparatus membrane</location>
        <topology evidence="4">Multi-pass membrane protein</topology>
    </subcellularLocation>
    <text evidence="2">Localizes to the cell membrane, where it is efficiently incorporated into budding gammaretrovirus virions and impairs subsequent virion penetration of susceptible target cells (By similarity).</text>
</comment>
<comment type="PTM">
    <text evidence="4">N-glycosylated.</text>
</comment>
<comment type="similarity">
    <text evidence="6">Belongs to the TDE1 family.</text>
</comment>
<sequence length="472" mass="52418">MGAVLGVFSLASWVPCLCGGASCLLCSCCPNSKNSTLTRLIYAFILFLGTIVCCIMFHEGMETQLKKIPGFCDEGLSTRITDIMDKECDVLVRYKAVYRISFALAVFFFAFSLLMLNVKTSKDPRAAIHNGFWFFKIAAIVGVMVGSFYIPGGHFNTAWFVIGMVGAAFFILIQLVLLVDFAHSWNESWVNRMEEGNPKCWYAALLSVTSLFYILSIIFAGLLYTYYTKPDGCTENKFFISFNLILCVVISVLSIHPKIQEHQPRSGLLQSSLITLYTMYLTWSAMSNEPDRSCNPGLLSIITHMTSSTLAPANTTAPAPTPAVPLQSGPSLNKENFIGLLVFVLSLSYSSIRNSSNSQVSKLTLSGSDSVILRDTAANGASDEEDGRPRRAVDNEREGVQYNYSMFHLMLCSASLYIMMTLTNWYSPDANFQSMTSKWPAVWVKISSSWVCLLLYVWTLVAPLVLTNRDFS</sequence>
<keyword id="KW-0051">Antiviral defense</keyword>
<keyword id="KW-1003">Cell membrane</keyword>
<keyword id="KW-0325">Glycoprotein</keyword>
<keyword id="KW-0333">Golgi apparatus</keyword>
<keyword id="KW-0391">Immunity</keyword>
<keyword id="KW-0399">Innate immunity</keyword>
<keyword id="KW-0472">Membrane</keyword>
<keyword id="KW-0597">Phosphoprotein</keyword>
<keyword id="KW-1185">Reference proteome</keyword>
<keyword id="KW-0812">Transmembrane</keyword>
<keyword id="KW-1133">Transmembrane helix</keyword>
<protein>
    <recommendedName>
        <fullName>Serine incorporator 3</fullName>
    </recommendedName>
</protein>
<feature type="chain" id="PRO_0000342158" description="Serine incorporator 3">
    <location>
        <begin position="1"/>
        <end position="472"/>
    </location>
</feature>
<feature type="topological domain" description="Extracellular" evidence="5">
    <location>
        <begin position="1"/>
        <end position="95"/>
    </location>
</feature>
<feature type="transmembrane region" description="Helical" evidence="5">
    <location>
        <begin position="96"/>
        <end position="116"/>
    </location>
</feature>
<feature type="topological domain" description="Cytoplasmic" evidence="5">
    <location>
        <begin position="117"/>
        <end position="131"/>
    </location>
</feature>
<feature type="transmembrane region" description="Helical" evidence="5">
    <location>
        <begin position="132"/>
        <end position="152"/>
    </location>
</feature>
<feature type="topological domain" description="Extracellular" evidence="5">
    <location>
        <begin position="153"/>
        <end position="158"/>
    </location>
</feature>
<feature type="transmembrane region" description="Helical" evidence="5">
    <location>
        <begin position="159"/>
        <end position="179"/>
    </location>
</feature>
<feature type="topological domain" description="Cytoplasmic" evidence="5">
    <location>
        <begin position="180"/>
        <end position="202"/>
    </location>
</feature>
<feature type="transmembrane region" description="Helical" evidence="5">
    <location>
        <begin position="203"/>
        <end position="223"/>
    </location>
</feature>
<feature type="topological domain" description="Extracellular" evidence="5">
    <location>
        <begin position="224"/>
        <end position="238"/>
    </location>
</feature>
<feature type="transmembrane region" description="Helical" evidence="5">
    <location>
        <begin position="239"/>
        <end position="259"/>
    </location>
</feature>
<feature type="topological domain" description="Cytoplasmic" evidence="5">
    <location>
        <begin position="260"/>
        <end position="328"/>
    </location>
</feature>
<feature type="transmembrane region" description="Helical" evidence="5">
    <location>
        <begin position="329"/>
        <end position="349"/>
    </location>
</feature>
<feature type="topological domain" description="Extracellular" evidence="5">
    <location>
        <begin position="350"/>
        <end position="405"/>
    </location>
</feature>
<feature type="transmembrane region" description="Helical" evidence="5">
    <location>
        <begin position="406"/>
        <end position="426"/>
    </location>
</feature>
<feature type="topological domain" description="Cytoplasmic" evidence="5">
    <location>
        <begin position="427"/>
        <end position="445"/>
    </location>
</feature>
<feature type="transmembrane region" description="Helical" evidence="5">
    <location>
        <begin position="446"/>
        <end position="466"/>
    </location>
</feature>
<feature type="topological domain" description="Extracellular" evidence="5">
    <location>
        <begin position="467"/>
        <end position="472"/>
    </location>
</feature>
<feature type="modified residue" description="Phosphoserine" evidence="3">
    <location>
        <position position="370"/>
    </location>
</feature>
<feature type="glycosylation site" description="N-linked (GlcNAc...) asparagine" evidence="5">
    <location>
        <position position="34"/>
    </location>
</feature>
<feature type="glycosylation site" description="N-linked (GlcNAc...) asparagine" evidence="5">
    <location>
        <position position="354"/>
    </location>
</feature>
<feature type="glycosylation site" description="N-linked (GlcNAc...) asparagine" evidence="5">
    <location>
        <position position="403"/>
    </location>
</feature>
<accession>A4FUZ5</accession>
<proteinExistence type="evidence at transcript level"/>
<name>SERC3_BOVIN</name>
<organism>
    <name type="scientific">Bos taurus</name>
    <name type="common">Bovine</name>
    <dbReference type="NCBI Taxonomy" id="9913"/>
    <lineage>
        <taxon>Eukaryota</taxon>
        <taxon>Metazoa</taxon>
        <taxon>Chordata</taxon>
        <taxon>Craniata</taxon>
        <taxon>Vertebrata</taxon>
        <taxon>Euteleostomi</taxon>
        <taxon>Mammalia</taxon>
        <taxon>Eutheria</taxon>
        <taxon>Laurasiatheria</taxon>
        <taxon>Artiodactyla</taxon>
        <taxon>Ruminantia</taxon>
        <taxon>Pecora</taxon>
        <taxon>Bovidae</taxon>
        <taxon>Bovinae</taxon>
        <taxon>Bos</taxon>
    </lineage>
</organism>
<reference key="1">
    <citation type="submission" date="2006-09" db="EMBL/GenBank/DDBJ databases">
        <authorList>
            <consortium name="NIH - Mammalian Gene Collection (MGC) project"/>
        </authorList>
    </citation>
    <scope>NUCLEOTIDE SEQUENCE [LARGE SCALE MRNA]</scope>
    <source>
        <strain>Hereford</strain>
        <tissue>Basal ganglia</tissue>
    </source>
</reference>